<comment type="function">
    <text evidence="1">Hydrolyzes a variety of simple alpha-D-galactoside as well as more complex molecules such as oligosaccharides and polysaccharides.</text>
</comment>
<comment type="catalytic activity">
    <reaction>
        <text>Hydrolysis of terminal, non-reducing alpha-D-galactose residues in alpha-D-galactosides, including galactose oligosaccharides, galactomannans and galactolipids.</text>
        <dbReference type="EC" id="3.2.1.22"/>
    </reaction>
</comment>
<comment type="subcellular location">
    <subcellularLocation>
        <location evidence="1">Secreted</location>
    </subcellularLocation>
</comment>
<comment type="similarity">
    <text evidence="4">Belongs to the glycosyl hydrolase 27 family.</text>
</comment>
<gene>
    <name type="primary">aglA</name>
    <name type="ORF">AFUA_5G13830</name>
</gene>
<accession>Q4WVZ3</accession>
<dbReference type="EC" id="3.2.1.22"/>
<dbReference type="EMBL" id="AAHF01000003">
    <property type="protein sequence ID" value="EAL91233.1"/>
    <property type="molecule type" value="Genomic_DNA"/>
</dbReference>
<dbReference type="RefSeq" id="XP_753271.1">
    <property type="nucleotide sequence ID" value="XM_748178.1"/>
</dbReference>
<dbReference type="SMR" id="Q4WVZ3"/>
<dbReference type="STRING" id="330879.Q4WVZ3"/>
<dbReference type="CAZy" id="CBM13">
    <property type="family name" value="Carbohydrate-Binding Module Family 13"/>
</dbReference>
<dbReference type="CAZy" id="GH27">
    <property type="family name" value="Glycoside Hydrolase Family 27"/>
</dbReference>
<dbReference type="GlyCosmos" id="Q4WVZ3">
    <property type="glycosylation" value="4 sites, No reported glycans"/>
</dbReference>
<dbReference type="EnsemblFungi" id="EAL91233">
    <property type="protein sequence ID" value="EAL91233"/>
    <property type="gene ID" value="AFUA_5G13830"/>
</dbReference>
<dbReference type="GeneID" id="3510720"/>
<dbReference type="KEGG" id="afm:AFUA_5G13830"/>
<dbReference type="VEuPathDB" id="FungiDB:Afu5g13830"/>
<dbReference type="HOGENOM" id="CLU_013093_3_3_1"/>
<dbReference type="InParanoid" id="Q4WVZ3"/>
<dbReference type="OMA" id="NWARFMC"/>
<dbReference type="OrthoDB" id="5795902at2759"/>
<dbReference type="Proteomes" id="UP000002530">
    <property type="component" value="Chromosome 5"/>
</dbReference>
<dbReference type="GO" id="GO:0005576">
    <property type="term" value="C:extracellular region"/>
    <property type="evidence" value="ECO:0007669"/>
    <property type="project" value="UniProtKB-SubCell"/>
</dbReference>
<dbReference type="GO" id="GO:0004557">
    <property type="term" value="F:alpha-galactosidase activity"/>
    <property type="evidence" value="ECO:0007669"/>
    <property type="project" value="UniProtKB-EC"/>
</dbReference>
<dbReference type="GO" id="GO:0030246">
    <property type="term" value="F:carbohydrate binding"/>
    <property type="evidence" value="ECO:0007669"/>
    <property type="project" value="UniProtKB-KW"/>
</dbReference>
<dbReference type="GO" id="GO:0005975">
    <property type="term" value="P:carbohydrate metabolic process"/>
    <property type="evidence" value="ECO:0007669"/>
    <property type="project" value="InterPro"/>
</dbReference>
<dbReference type="CDD" id="cd23425">
    <property type="entry name" value="beta-trefoil_Ricin_AglA"/>
    <property type="match status" value="1"/>
</dbReference>
<dbReference type="CDD" id="cd14792">
    <property type="entry name" value="GH27"/>
    <property type="match status" value="1"/>
</dbReference>
<dbReference type="FunFam" id="3.20.20.70:FF:000177">
    <property type="entry name" value="Alpha-galactosidase"/>
    <property type="match status" value="1"/>
</dbReference>
<dbReference type="FunFam" id="2.60.40.1180:FF:000056">
    <property type="entry name" value="Alpha-galactosidase A"/>
    <property type="match status" value="1"/>
</dbReference>
<dbReference type="FunFam" id="2.80.10.50:FF:000077">
    <property type="entry name" value="Alpha-galactosidase A"/>
    <property type="match status" value="1"/>
</dbReference>
<dbReference type="Gene3D" id="2.80.10.50">
    <property type="match status" value="1"/>
</dbReference>
<dbReference type="Gene3D" id="3.20.20.70">
    <property type="entry name" value="Aldolase class I"/>
    <property type="match status" value="1"/>
</dbReference>
<dbReference type="Gene3D" id="2.60.40.1180">
    <property type="entry name" value="Golgi alpha-mannosidase II"/>
    <property type="match status" value="1"/>
</dbReference>
<dbReference type="InterPro" id="IPR013785">
    <property type="entry name" value="Aldolase_TIM"/>
</dbReference>
<dbReference type="InterPro" id="IPR002241">
    <property type="entry name" value="Glyco_hydro_27"/>
</dbReference>
<dbReference type="InterPro" id="IPR013780">
    <property type="entry name" value="Glyco_hydro_b"/>
</dbReference>
<dbReference type="InterPro" id="IPR017853">
    <property type="entry name" value="Glycoside_hydrolase_SF"/>
</dbReference>
<dbReference type="InterPro" id="IPR041233">
    <property type="entry name" value="Melibiase_C"/>
</dbReference>
<dbReference type="InterPro" id="IPR035992">
    <property type="entry name" value="Ricin_B-like_lectins"/>
</dbReference>
<dbReference type="InterPro" id="IPR000772">
    <property type="entry name" value="Ricin_B_lectin"/>
</dbReference>
<dbReference type="PANTHER" id="PTHR11452:SF91">
    <property type="entry name" value="ALPHA-GALACTOSIDASE A-RELATED"/>
    <property type="match status" value="1"/>
</dbReference>
<dbReference type="PANTHER" id="PTHR11452">
    <property type="entry name" value="ALPHA-GALACTOSIDASE/ALPHA-N-ACETYLGALACTOSAMINIDASE"/>
    <property type="match status" value="1"/>
</dbReference>
<dbReference type="Pfam" id="PF16499">
    <property type="entry name" value="Melibiase_2"/>
    <property type="match status" value="1"/>
</dbReference>
<dbReference type="Pfam" id="PF17801">
    <property type="entry name" value="Melibiase_C"/>
    <property type="match status" value="1"/>
</dbReference>
<dbReference type="Pfam" id="PF00652">
    <property type="entry name" value="Ricin_B_lectin"/>
    <property type="match status" value="1"/>
</dbReference>
<dbReference type="PRINTS" id="PR00740">
    <property type="entry name" value="GLHYDRLASE27"/>
</dbReference>
<dbReference type="SMART" id="SM00458">
    <property type="entry name" value="RICIN"/>
    <property type="match status" value="1"/>
</dbReference>
<dbReference type="SUPFAM" id="SSF51445">
    <property type="entry name" value="(Trans)glycosidases"/>
    <property type="match status" value="1"/>
</dbReference>
<dbReference type="SUPFAM" id="SSF51011">
    <property type="entry name" value="Glycosyl hydrolase domain"/>
    <property type="match status" value="1"/>
</dbReference>
<dbReference type="SUPFAM" id="SSF50370">
    <property type="entry name" value="Ricin B-like lectins"/>
    <property type="match status" value="1"/>
</dbReference>
<dbReference type="PROSITE" id="PS50231">
    <property type="entry name" value="RICIN_B_LECTIN"/>
    <property type="match status" value="1"/>
</dbReference>
<protein>
    <recommendedName>
        <fullName>Probable alpha-galactosidase A</fullName>
        <ecNumber>3.2.1.22</ecNumber>
    </recommendedName>
    <alternativeName>
        <fullName>Melibiase A</fullName>
    </alternativeName>
</protein>
<name>AGALA_ASPFU</name>
<proteinExistence type="inferred from homology"/>
<keyword id="KW-1015">Disulfide bond</keyword>
<keyword id="KW-0325">Glycoprotein</keyword>
<keyword id="KW-0326">Glycosidase</keyword>
<keyword id="KW-0378">Hydrolase</keyword>
<keyword id="KW-0430">Lectin</keyword>
<keyword id="KW-1185">Reference proteome</keyword>
<keyword id="KW-0964">Secreted</keyword>
<keyword id="KW-0732">Signal</keyword>
<sequence length="532" mass="58991">MDTTKSLLSTLIAIMIPLSLGSVSSPNLLPTPPMGFNNWARFMCDLNETLFLETASAMISTGLLEAGYNRVNLDDCWMAYDRAADSSLQWNTTKFPHGIPWLARHLKAQGFHVGIYEDAGNLTCGGYPGSFGHEALDAQTFAAWGIDYLKLDGCNVFPEHSRTLEEEYKARYAHWHSILKQMHHPLIFSESAPAYFADPANLTSWYEVMDWVPAFGELARHSTDILVYVGEGSAWDSIMVNYRYNTLLARYQRPGYINDPDFLIPDHPGLTLEEKRSQFALWASFSAPLIVSAYIPGLSSEELAILRNEELIRVDQDVLGLQATLASRGLEVDVLTRSLEGGDRLLTVLNRGDGVAVVSVPVEWMGLQRGCPYVVKNLWDGEVQVLEEEIVIRLNSHATQVYRIALPDECSTVIPTGIVFNTASGNCLTDENGERVGFEACRGSETQIWQVSELGYLRPLSRTSHCLTGGSQASVQLCTEQKNQQWAYAITGILKNEHTEMCLTEGTGISQCGFERDSQVFGLPSGVDIKPS</sequence>
<evidence type="ECO:0000250" key="1"/>
<evidence type="ECO:0000255" key="2"/>
<evidence type="ECO:0000255" key="3">
    <source>
        <dbReference type="PROSITE-ProRule" id="PRU00174"/>
    </source>
</evidence>
<evidence type="ECO:0000305" key="4"/>
<feature type="signal peptide" evidence="2">
    <location>
        <begin position="1"/>
        <end position="21"/>
    </location>
</feature>
<feature type="chain" id="PRO_0000393209" description="Probable alpha-galactosidase A">
    <location>
        <begin position="22"/>
        <end position="532"/>
    </location>
</feature>
<feature type="domain" description="Ricin B-type lectin" evidence="3">
    <location>
        <begin position="410"/>
        <end position="531"/>
    </location>
</feature>
<feature type="active site" description="Nucleophile" evidence="1">
    <location>
        <position position="152"/>
    </location>
</feature>
<feature type="active site" description="Proton donor" evidence="1">
    <location>
        <position position="210"/>
    </location>
</feature>
<feature type="glycosylation site" description="N-linked (GlcNAc...) asparagine" evidence="2">
    <location>
        <position position="47"/>
    </location>
</feature>
<feature type="glycosylation site" description="N-linked (GlcNAc...) asparagine" evidence="2">
    <location>
        <position position="91"/>
    </location>
</feature>
<feature type="glycosylation site" description="N-linked (GlcNAc...) asparagine" evidence="2">
    <location>
        <position position="121"/>
    </location>
</feature>
<feature type="glycosylation site" description="N-linked (GlcNAc...) asparagine" evidence="2">
    <location>
        <position position="201"/>
    </location>
</feature>
<feature type="disulfide bond" evidence="3">
    <location>
        <begin position="44"/>
        <end position="76"/>
    </location>
</feature>
<feature type="disulfide bond" evidence="3">
    <location>
        <begin position="124"/>
        <end position="154"/>
    </location>
</feature>
<feature type="disulfide bond" evidence="3">
    <location>
        <begin position="427"/>
        <end position="441"/>
    </location>
</feature>
<feature type="disulfide bond" evidence="3">
    <location>
        <begin position="466"/>
        <end position="478"/>
    </location>
</feature>
<organism>
    <name type="scientific">Aspergillus fumigatus (strain ATCC MYA-4609 / CBS 101355 / FGSC A1100 / Af293)</name>
    <name type="common">Neosartorya fumigata</name>
    <dbReference type="NCBI Taxonomy" id="330879"/>
    <lineage>
        <taxon>Eukaryota</taxon>
        <taxon>Fungi</taxon>
        <taxon>Dikarya</taxon>
        <taxon>Ascomycota</taxon>
        <taxon>Pezizomycotina</taxon>
        <taxon>Eurotiomycetes</taxon>
        <taxon>Eurotiomycetidae</taxon>
        <taxon>Eurotiales</taxon>
        <taxon>Aspergillaceae</taxon>
        <taxon>Aspergillus</taxon>
        <taxon>Aspergillus subgen. Fumigati</taxon>
    </lineage>
</organism>
<reference key="1">
    <citation type="journal article" date="2005" name="Nature">
        <title>Genomic sequence of the pathogenic and allergenic filamentous fungus Aspergillus fumigatus.</title>
        <authorList>
            <person name="Nierman W.C."/>
            <person name="Pain A."/>
            <person name="Anderson M.J."/>
            <person name="Wortman J.R."/>
            <person name="Kim H.S."/>
            <person name="Arroyo J."/>
            <person name="Berriman M."/>
            <person name="Abe K."/>
            <person name="Archer D.B."/>
            <person name="Bermejo C."/>
            <person name="Bennett J.W."/>
            <person name="Bowyer P."/>
            <person name="Chen D."/>
            <person name="Collins M."/>
            <person name="Coulsen R."/>
            <person name="Davies R."/>
            <person name="Dyer P.S."/>
            <person name="Farman M.L."/>
            <person name="Fedorova N."/>
            <person name="Fedorova N.D."/>
            <person name="Feldblyum T.V."/>
            <person name="Fischer R."/>
            <person name="Fosker N."/>
            <person name="Fraser A."/>
            <person name="Garcia J.L."/>
            <person name="Garcia M.J."/>
            <person name="Goble A."/>
            <person name="Goldman G.H."/>
            <person name="Gomi K."/>
            <person name="Griffith-Jones S."/>
            <person name="Gwilliam R."/>
            <person name="Haas B.J."/>
            <person name="Haas H."/>
            <person name="Harris D.E."/>
            <person name="Horiuchi H."/>
            <person name="Huang J."/>
            <person name="Humphray S."/>
            <person name="Jimenez J."/>
            <person name="Keller N."/>
            <person name="Khouri H."/>
            <person name="Kitamoto K."/>
            <person name="Kobayashi T."/>
            <person name="Konzack S."/>
            <person name="Kulkarni R."/>
            <person name="Kumagai T."/>
            <person name="Lafton A."/>
            <person name="Latge J.-P."/>
            <person name="Li W."/>
            <person name="Lord A."/>
            <person name="Lu C."/>
            <person name="Majoros W.H."/>
            <person name="May G.S."/>
            <person name="Miller B.L."/>
            <person name="Mohamoud Y."/>
            <person name="Molina M."/>
            <person name="Monod M."/>
            <person name="Mouyna I."/>
            <person name="Mulligan S."/>
            <person name="Murphy L.D."/>
            <person name="O'Neil S."/>
            <person name="Paulsen I."/>
            <person name="Penalva M.A."/>
            <person name="Pertea M."/>
            <person name="Price C."/>
            <person name="Pritchard B.L."/>
            <person name="Quail M.A."/>
            <person name="Rabbinowitsch E."/>
            <person name="Rawlins N."/>
            <person name="Rajandream M.A."/>
            <person name="Reichard U."/>
            <person name="Renauld H."/>
            <person name="Robson G.D."/>
            <person name="Rodriguez de Cordoba S."/>
            <person name="Rodriguez-Pena J.M."/>
            <person name="Ronning C.M."/>
            <person name="Rutter S."/>
            <person name="Salzberg S.L."/>
            <person name="Sanchez M."/>
            <person name="Sanchez-Ferrero J.C."/>
            <person name="Saunders D."/>
            <person name="Seeger K."/>
            <person name="Squares R."/>
            <person name="Squares S."/>
            <person name="Takeuchi M."/>
            <person name="Tekaia F."/>
            <person name="Turner G."/>
            <person name="Vazquez de Aldana C.R."/>
            <person name="Weidman J."/>
            <person name="White O."/>
            <person name="Woodward J.R."/>
            <person name="Yu J.-H."/>
            <person name="Fraser C.M."/>
            <person name="Galagan J.E."/>
            <person name="Asai K."/>
            <person name="Machida M."/>
            <person name="Hall N."/>
            <person name="Barrell B.G."/>
            <person name="Denning D.W."/>
        </authorList>
    </citation>
    <scope>NUCLEOTIDE SEQUENCE [LARGE SCALE GENOMIC DNA]</scope>
    <source>
        <strain>ATCC MYA-4609 / CBS 101355 / FGSC A1100 / Af293</strain>
    </source>
</reference>